<keyword id="KW-0002">3D-structure</keyword>
<keyword id="KW-0007">Acetylation</keyword>
<keyword id="KW-0025">Alternative splicing</keyword>
<keyword id="KW-0175">Coiled coil</keyword>
<keyword id="KW-0963">Cytoplasm</keyword>
<keyword id="KW-1017">Isopeptide bond</keyword>
<keyword id="KW-0597">Phosphoprotein</keyword>
<keyword id="KW-1185">Reference proteome</keyword>
<keyword id="KW-0677">Repeat</keyword>
<keyword id="KW-0832">Ubl conjugation</keyword>
<feature type="chain" id="PRO_0000191035" description="Liprin-beta-1">
    <location>
        <begin position="1"/>
        <end position="969"/>
    </location>
</feature>
<feature type="domain" description="SAM 1" evidence="3">
    <location>
        <begin position="606"/>
        <end position="670"/>
    </location>
</feature>
<feature type="domain" description="SAM 2" evidence="3">
    <location>
        <begin position="678"/>
        <end position="741"/>
    </location>
</feature>
<feature type="domain" description="SAM 3" evidence="3">
    <location>
        <begin position="763"/>
        <end position="835"/>
    </location>
</feature>
<feature type="region of interest" description="Disordered" evidence="4">
    <location>
        <begin position="342"/>
        <end position="361"/>
    </location>
</feature>
<feature type="region of interest" description="Disordered" evidence="4">
    <location>
        <begin position="381"/>
        <end position="407"/>
    </location>
</feature>
<feature type="region of interest" description="Disordered" evidence="4">
    <location>
        <begin position="424"/>
        <end position="482"/>
    </location>
</feature>
<feature type="region of interest" description="Disordered" evidence="4">
    <location>
        <begin position="518"/>
        <end position="593"/>
    </location>
</feature>
<feature type="coiled-coil region" evidence="2">
    <location>
        <begin position="99"/>
        <end position="310"/>
    </location>
</feature>
<feature type="compositionally biased region" description="Low complexity" evidence="4">
    <location>
        <begin position="346"/>
        <end position="358"/>
    </location>
</feature>
<feature type="compositionally biased region" description="Low complexity" evidence="4">
    <location>
        <begin position="426"/>
        <end position="438"/>
    </location>
</feature>
<feature type="compositionally biased region" description="Basic and acidic residues" evidence="4">
    <location>
        <begin position="439"/>
        <end position="452"/>
    </location>
</feature>
<feature type="compositionally biased region" description="Polar residues" evidence="4">
    <location>
        <begin position="518"/>
        <end position="529"/>
    </location>
</feature>
<feature type="compositionally biased region" description="Basic residues" evidence="4">
    <location>
        <begin position="543"/>
        <end position="557"/>
    </location>
</feature>
<feature type="modified residue" description="Phosphoserine" evidence="1">
    <location>
        <position position="37"/>
    </location>
</feature>
<feature type="modified residue" description="Phosphothreonine" evidence="1">
    <location>
        <position position="39"/>
    </location>
</feature>
<feature type="modified residue" description="Phosphoserine" evidence="10">
    <location>
        <position position="40"/>
    </location>
</feature>
<feature type="modified residue" description="N6-acetyllysine" evidence="1">
    <location>
        <position position="291"/>
    </location>
</feature>
<feature type="modified residue" description="Phosphoserine" evidence="10">
    <location>
        <position position="403"/>
    </location>
</feature>
<feature type="modified residue" description="Phosphoserine" evidence="1">
    <location>
        <position position="435"/>
    </location>
</feature>
<feature type="modified residue" description="Phosphoserine" evidence="1">
    <location>
        <position position="500"/>
    </location>
</feature>
<feature type="modified residue" description="Phosphoserine" evidence="9 10">
    <location>
        <position position="538"/>
    </location>
</feature>
<feature type="modified residue" description="Phosphoserine" evidence="9 10">
    <location>
        <position position="560"/>
    </location>
</feature>
<feature type="modified residue" description="Phosphoserine" evidence="8 10">
    <location>
        <position position="595"/>
    </location>
</feature>
<feature type="modified residue" description="Phosphoserine" evidence="10">
    <location>
        <position position="753"/>
    </location>
</feature>
<feature type="modified residue" description="Phosphoserine" evidence="10">
    <location>
        <position position="757"/>
    </location>
</feature>
<feature type="modified residue" description="Phosphoserine" evidence="1">
    <location>
        <position position="957"/>
    </location>
</feature>
<feature type="modified residue" description="Phosphoserine" evidence="1">
    <location>
        <position position="959"/>
    </location>
</feature>
<feature type="modified residue" description="Phosphoserine" evidence="10">
    <location>
        <position position="961"/>
    </location>
</feature>
<feature type="modified residue" description="Phosphothreonine" evidence="1">
    <location>
        <position position="963"/>
    </location>
</feature>
<feature type="cross-link" description="Glycyl lysine isopeptide (Lys-Gly) (interchain with G-Cter in SUMO2)" evidence="1">
    <location>
        <position position="440"/>
    </location>
</feature>
<feature type="splice variant" id="VSP_012095" description="In isoform 2." evidence="6">
    <location>
        <begin position="1"/>
        <end position="276"/>
    </location>
</feature>
<feature type="splice variant" id="VSP_012096" description="In isoform 3." evidence="5">
    <original>D</original>
    <variation>DENIKKKLKEKN</variation>
    <location>
        <position position="271"/>
    </location>
</feature>
<feature type="sequence conflict" description="In Ref. 3; BAD32411." evidence="7" ref="3">
    <original>L</original>
    <variation>P</variation>
    <location>
        <position position="360"/>
    </location>
</feature>
<feature type="sequence conflict" description="In Ref. 1 and 3." evidence="7" ref="1 3">
    <original>D</original>
    <variation>E</variation>
    <location>
        <position position="389"/>
    </location>
</feature>
<feature type="sequence conflict" description="In Ref. 1; BAC31950." evidence="7" ref="1">
    <original>NKTLLRRHLATHFNLLIGAEAQHQKRDAMELPDYVLLTATAKVKPKKLTFSNFGNLRK</original>
    <variation>CQQHLHLPLTVLFLYIFLNTCIYTVYRKQNLYFVTQGSKDHIKMKKPQYFNDHIPADS</variation>
    <location>
        <begin position="817"/>
        <end position="874"/>
    </location>
</feature>
<feature type="sequence conflict" description="In Ref. 1." evidence="7" ref="1">
    <location>
        <begin position="875"/>
        <end position="969"/>
    </location>
</feature>
<feature type="helix" evidence="12">
    <location>
        <begin position="43"/>
        <end position="60"/>
    </location>
</feature>
<feature type="helix" evidence="12">
    <location>
        <begin position="64"/>
        <end position="73"/>
    </location>
</feature>
<feature type="helix" evidence="12">
    <location>
        <begin position="76"/>
        <end position="86"/>
    </location>
</feature>
<feature type="helix" evidence="11">
    <location>
        <begin position="603"/>
        <end position="605"/>
    </location>
</feature>
<feature type="helix" evidence="11">
    <location>
        <begin position="608"/>
        <end position="617"/>
    </location>
</feature>
<feature type="turn" evidence="11">
    <location>
        <begin position="618"/>
        <end position="620"/>
    </location>
</feature>
<feature type="helix" evidence="11">
    <location>
        <begin position="624"/>
        <end position="627"/>
    </location>
</feature>
<feature type="turn" evidence="11">
    <location>
        <begin position="628"/>
        <end position="630"/>
    </location>
</feature>
<feature type="helix" evidence="11">
    <location>
        <begin position="635"/>
        <end position="639"/>
    </location>
</feature>
<feature type="helix" evidence="11">
    <location>
        <begin position="642"/>
        <end position="648"/>
    </location>
</feature>
<feature type="helix" evidence="11">
    <location>
        <begin position="654"/>
        <end position="669"/>
    </location>
</feature>
<feature type="helix" evidence="11">
    <location>
        <begin position="675"/>
        <end position="677"/>
    </location>
</feature>
<feature type="helix" evidence="11">
    <location>
        <begin position="680"/>
        <end position="690"/>
    </location>
</feature>
<feature type="helix" evidence="11">
    <location>
        <begin position="693"/>
        <end position="695"/>
    </location>
</feature>
<feature type="helix" evidence="11">
    <location>
        <begin position="696"/>
        <end position="702"/>
    </location>
</feature>
<feature type="helix" evidence="11">
    <location>
        <begin position="706"/>
        <end position="710"/>
    </location>
</feature>
<feature type="helix" evidence="11">
    <location>
        <begin position="714"/>
        <end position="719"/>
    </location>
</feature>
<feature type="helix" evidence="11">
    <location>
        <begin position="725"/>
        <end position="740"/>
    </location>
</feature>
<feature type="turn" evidence="11">
    <location>
        <begin position="741"/>
        <end position="743"/>
    </location>
</feature>
<feature type="strand" evidence="11">
    <location>
        <begin position="747"/>
        <end position="749"/>
    </location>
</feature>
<feature type="helix" evidence="11">
    <location>
        <begin position="755"/>
        <end position="757"/>
    </location>
</feature>
<feature type="helix" evidence="11">
    <location>
        <begin position="760"/>
        <end position="765"/>
    </location>
</feature>
<feature type="helix" evidence="11">
    <location>
        <begin position="768"/>
        <end position="777"/>
    </location>
</feature>
<feature type="turn" evidence="11">
    <location>
        <begin position="781"/>
        <end position="783"/>
    </location>
</feature>
<feature type="helix" evidence="11">
    <location>
        <begin position="784"/>
        <end position="787"/>
    </location>
</feature>
<feature type="helix" evidence="11">
    <location>
        <begin position="794"/>
        <end position="799"/>
    </location>
</feature>
<feature type="helix" evidence="11">
    <location>
        <begin position="805"/>
        <end position="811"/>
    </location>
</feature>
<feature type="helix" evidence="11">
    <location>
        <begin position="819"/>
        <end position="833"/>
    </location>
</feature>
<feature type="helix" evidence="11">
    <location>
        <begin position="835"/>
        <end position="844"/>
    </location>
</feature>
<proteinExistence type="evidence at protein level"/>
<comment type="function">
    <text evidence="1">May regulate the disassembly of focal adhesions. Did not bind receptor-like tyrosine phosphatases type 2A (By similarity).</text>
</comment>
<comment type="subunit">
    <text evidence="1">Forms homodimers and heterodimers. Interacts with S100A4 in a Ca(2+)-dependent mode. Part of a cortical microtubule stabilization complex (CMSC) composed of KANK1, PPFIA1, PPFIBP1, ERC1/ELKS, PHLDB2/LL5beta, CLASPs, KIF21A and possibly additional interactors; within CMSCs KANK1 and PHLDB2/LL5beta seem to be the core components for recruiting microtubule-binding proteins KIF21A and CLASPs, whereas PPFIA1, PPFIBP1 and ERC1/ELKS serve as scaffolds for protein clustering. Interacts with KANK1 (via CC1 domain, residues 244-339).</text>
</comment>
<comment type="subcellular location">
    <subcellularLocation>
        <location evidence="1">Cytoplasm</location>
        <location evidence="1">Cell cortex</location>
    </subcellularLocation>
</comment>
<comment type="alternative products">
    <event type="alternative splicing"/>
    <isoform>
        <id>Q8C8U0-1</id>
        <name>1</name>
        <sequence type="displayed"/>
    </isoform>
    <isoform>
        <id>Q8C8U0-2</id>
        <name>2</name>
        <sequence type="described" ref="VSP_012095"/>
    </isoform>
    <isoform>
        <id>Q8C8U0-3</id>
        <name>3</name>
        <sequence type="described" ref="VSP_012096"/>
    </isoform>
</comment>
<comment type="domain">
    <text evidence="1">The N-terminal coiled coil regions mediate homodimerization preferentially and heterodimerization type beta/beta. The C-terminal, non-coiled coil regions mediate heterodimerization type beta/alpha and interaction with S100A4 (By similarity).</text>
</comment>
<comment type="similarity">
    <text evidence="7">Belongs to the liprin family. Liprin-beta subfamily.</text>
</comment>
<comment type="sequence caution" evidence="7">
    <conflict type="erroneous initiation">
        <sequence resource="EMBL-CDS" id="BAD32411"/>
    </conflict>
    <text>Extended N-terminus.</text>
</comment>
<reference key="1">
    <citation type="journal article" date="2005" name="Science">
        <title>The transcriptional landscape of the mammalian genome.</title>
        <authorList>
            <person name="Carninci P."/>
            <person name="Kasukawa T."/>
            <person name="Katayama S."/>
            <person name="Gough J."/>
            <person name="Frith M.C."/>
            <person name="Maeda N."/>
            <person name="Oyama R."/>
            <person name="Ravasi T."/>
            <person name="Lenhard B."/>
            <person name="Wells C."/>
            <person name="Kodzius R."/>
            <person name="Shimokawa K."/>
            <person name="Bajic V.B."/>
            <person name="Brenner S.E."/>
            <person name="Batalov S."/>
            <person name="Forrest A.R."/>
            <person name="Zavolan M."/>
            <person name="Davis M.J."/>
            <person name="Wilming L.G."/>
            <person name="Aidinis V."/>
            <person name="Allen J.E."/>
            <person name="Ambesi-Impiombato A."/>
            <person name="Apweiler R."/>
            <person name="Aturaliya R.N."/>
            <person name="Bailey T.L."/>
            <person name="Bansal M."/>
            <person name="Baxter L."/>
            <person name="Beisel K.W."/>
            <person name="Bersano T."/>
            <person name="Bono H."/>
            <person name="Chalk A.M."/>
            <person name="Chiu K.P."/>
            <person name="Choudhary V."/>
            <person name="Christoffels A."/>
            <person name="Clutterbuck D.R."/>
            <person name="Crowe M.L."/>
            <person name="Dalla E."/>
            <person name="Dalrymple B.P."/>
            <person name="de Bono B."/>
            <person name="Della Gatta G."/>
            <person name="di Bernardo D."/>
            <person name="Down T."/>
            <person name="Engstrom P."/>
            <person name="Fagiolini M."/>
            <person name="Faulkner G."/>
            <person name="Fletcher C.F."/>
            <person name="Fukushima T."/>
            <person name="Furuno M."/>
            <person name="Futaki S."/>
            <person name="Gariboldi M."/>
            <person name="Georgii-Hemming P."/>
            <person name="Gingeras T.R."/>
            <person name="Gojobori T."/>
            <person name="Green R.E."/>
            <person name="Gustincich S."/>
            <person name="Harbers M."/>
            <person name="Hayashi Y."/>
            <person name="Hensch T.K."/>
            <person name="Hirokawa N."/>
            <person name="Hill D."/>
            <person name="Huminiecki L."/>
            <person name="Iacono M."/>
            <person name="Ikeo K."/>
            <person name="Iwama A."/>
            <person name="Ishikawa T."/>
            <person name="Jakt M."/>
            <person name="Kanapin A."/>
            <person name="Katoh M."/>
            <person name="Kawasawa Y."/>
            <person name="Kelso J."/>
            <person name="Kitamura H."/>
            <person name="Kitano H."/>
            <person name="Kollias G."/>
            <person name="Krishnan S.P."/>
            <person name="Kruger A."/>
            <person name="Kummerfeld S.K."/>
            <person name="Kurochkin I.V."/>
            <person name="Lareau L.F."/>
            <person name="Lazarevic D."/>
            <person name="Lipovich L."/>
            <person name="Liu J."/>
            <person name="Liuni S."/>
            <person name="McWilliam S."/>
            <person name="Madan Babu M."/>
            <person name="Madera M."/>
            <person name="Marchionni L."/>
            <person name="Matsuda H."/>
            <person name="Matsuzawa S."/>
            <person name="Miki H."/>
            <person name="Mignone F."/>
            <person name="Miyake S."/>
            <person name="Morris K."/>
            <person name="Mottagui-Tabar S."/>
            <person name="Mulder N."/>
            <person name="Nakano N."/>
            <person name="Nakauchi H."/>
            <person name="Ng P."/>
            <person name="Nilsson R."/>
            <person name="Nishiguchi S."/>
            <person name="Nishikawa S."/>
            <person name="Nori F."/>
            <person name="Ohara O."/>
            <person name="Okazaki Y."/>
            <person name="Orlando V."/>
            <person name="Pang K.C."/>
            <person name="Pavan W.J."/>
            <person name="Pavesi G."/>
            <person name="Pesole G."/>
            <person name="Petrovsky N."/>
            <person name="Piazza S."/>
            <person name="Reed J."/>
            <person name="Reid J.F."/>
            <person name="Ring B.Z."/>
            <person name="Ringwald M."/>
            <person name="Rost B."/>
            <person name="Ruan Y."/>
            <person name="Salzberg S.L."/>
            <person name="Sandelin A."/>
            <person name="Schneider C."/>
            <person name="Schoenbach C."/>
            <person name="Sekiguchi K."/>
            <person name="Semple C.A."/>
            <person name="Seno S."/>
            <person name="Sessa L."/>
            <person name="Sheng Y."/>
            <person name="Shibata Y."/>
            <person name="Shimada H."/>
            <person name="Shimada K."/>
            <person name="Silva D."/>
            <person name="Sinclair B."/>
            <person name="Sperling S."/>
            <person name="Stupka E."/>
            <person name="Sugiura K."/>
            <person name="Sultana R."/>
            <person name="Takenaka Y."/>
            <person name="Taki K."/>
            <person name="Tammoja K."/>
            <person name="Tan S.L."/>
            <person name="Tang S."/>
            <person name="Taylor M.S."/>
            <person name="Tegner J."/>
            <person name="Teichmann S.A."/>
            <person name="Ueda H.R."/>
            <person name="van Nimwegen E."/>
            <person name="Verardo R."/>
            <person name="Wei C.L."/>
            <person name="Yagi K."/>
            <person name="Yamanishi H."/>
            <person name="Zabarovsky E."/>
            <person name="Zhu S."/>
            <person name="Zimmer A."/>
            <person name="Hide W."/>
            <person name="Bult C."/>
            <person name="Grimmond S.M."/>
            <person name="Teasdale R.D."/>
            <person name="Liu E.T."/>
            <person name="Brusic V."/>
            <person name="Quackenbush J."/>
            <person name="Wahlestedt C."/>
            <person name="Mattick J.S."/>
            <person name="Hume D.A."/>
            <person name="Kai C."/>
            <person name="Sasaki D."/>
            <person name="Tomaru Y."/>
            <person name="Fukuda S."/>
            <person name="Kanamori-Katayama M."/>
            <person name="Suzuki M."/>
            <person name="Aoki J."/>
            <person name="Arakawa T."/>
            <person name="Iida J."/>
            <person name="Imamura K."/>
            <person name="Itoh M."/>
            <person name="Kato T."/>
            <person name="Kawaji H."/>
            <person name="Kawagashira N."/>
            <person name="Kawashima T."/>
            <person name="Kojima M."/>
            <person name="Kondo S."/>
            <person name="Konno H."/>
            <person name="Nakano K."/>
            <person name="Ninomiya N."/>
            <person name="Nishio T."/>
            <person name="Okada M."/>
            <person name="Plessy C."/>
            <person name="Shibata K."/>
            <person name="Shiraki T."/>
            <person name="Suzuki S."/>
            <person name="Tagami M."/>
            <person name="Waki K."/>
            <person name="Watahiki A."/>
            <person name="Okamura-Oho Y."/>
            <person name="Suzuki H."/>
            <person name="Kawai J."/>
            <person name="Hayashizaki Y."/>
        </authorList>
    </citation>
    <scope>NUCLEOTIDE SEQUENCE [LARGE SCALE MRNA] (ISOFORM 2)</scope>
    <source>
        <strain>C57BL/6J</strain>
        <tissue>Retina</tissue>
    </source>
</reference>
<reference key="2">
    <citation type="journal article" date="2004" name="DNA Res.">
        <title>Prediction of the coding sequences of mouse homologues of KIAA gene: IV. The complete nucleotide sequences of 500 mouse KIAA-homologous cDNAs identified by screening of terminal sequences of cDNA clones randomly sampled from size-fractionated libraries.</title>
        <authorList>
            <person name="Okazaki N."/>
            <person name="Kikuno R."/>
            <person name="Ohara R."/>
            <person name="Inamoto S."/>
            <person name="Koseki H."/>
            <person name="Hiraoka S."/>
            <person name="Saga Y."/>
            <person name="Seino S."/>
            <person name="Nishimura M."/>
            <person name="Kaisho T."/>
            <person name="Hoshino K."/>
            <person name="Kitamura H."/>
            <person name="Nagase T."/>
            <person name="Ohara O."/>
            <person name="Koga H."/>
        </authorList>
    </citation>
    <scope>NUCLEOTIDE SEQUENCE [LARGE SCALE MRNA] (ISOFORM 3)</scope>
    <source>
        <tissue>Fetal brain</tissue>
    </source>
</reference>
<reference key="3">
    <citation type="journal article" date="2004" name="Genome Res.">
        <title>The status, quality, and expansion of the NIH full-length cDNA project: the Mammalian Gene Collection (MGC).</title>
        <authorList>
            <consortium name="The MGC Project Team"/>
        </authorList>
    </citation>
    <scope>NUCLEOTIDE SEQUENCE [LARGE SCALE MRNA] (ISOFORM 1)</scope>
    <source>
        <strain>C57BL/6J</strain>
        <tissue>Mammary cancer</tissue>
    </source>
</reference>
<reference key="4">
    <citation type="journal article" date="2007" name="Proc. Natl. Acad. Sci. U.S.A.">
        <title>Large-scale phosphorylation analysis of mouse liver.</title>
        <authorList>
            <person name="Villen J."/>
            <person name="Beausoleil S.A."/>
            <person name="Gerber S.A."/>
            <person name="Gygi S.P."/>
        </authorList>
    </citation>
    <scope>PHOSPHORYLATION [LARGE SCALE ANALYSIS] AT SER-595</scope>
    <scope>IDENTIFICATION BY MASS SPECTROMETRY [LARGE SCALE ANALYSIS]</scope>
    <source>
        <tissue>Liver</tissue>
    </source>
</reference>
<reference key="5">
    <citation type="journal article" date="2009" name="Immunity">
        <title>The phagosomal proteome in interferon-gamma-activated macrophages.</title>
        <authorList>
            <person name="Trost M."/>
            <person name="English L."/>
            <person name="Lemieux S."/>
            <person name="Courcelles M."/>
            <person name="Desjardins M."/>
            <person name="Thibault P."/>
        </authorList>
    </citation>
    <scope>IDENTIFICATION BY MASS SPECTROMETRY [LARGE SCALE ANALYSIS]</scope>
</reference>
<reference key="6">
    <citation type="journal article" date="2009" name="Mol. Cell. Proteomics">
        <title>Large scale localization of protein phosphorylation by use of electron capture dissociation mass spectrometry.</title>
        <authorList>
            <person name="Sweet S.M."/>
            <person name="Bailey C.M."/>
            <person name="Cunningham D.L."/>
            <person name="Heath J.K."/>
            <person name="Cooper H.J."/>
        </authorList>
    </citation>
    <scope>PHOSPHORYLATION [LARGE SCALE ANALYSIS] AT SER-538 AND SER-560</scope>
    <scope>IDENTIFICATION BY MASS SPECTROMETRY [LARGE SCALE ANALYSIS]</scope>
    <source>
        <tissue>Embryonic fibroblast</tissue>
    </source>
</reference>
<reference key="7">
    <citation type="journal article" date="2010" name="Cell">
        <title>A tissue-specific atlas of mouse protein phosphorylation and expression.</title>
        <authorList>
            <person name="Huttlin E.L."/>
            <person name="Jedrychowski M.P."/>
            <person name="Elias J.E."/>
            <person name="Goswami T."/>
            <person name="Rad R."/>
            <person name="Beausoleil S.A."/>
            <person name="Villen J."/>
            <person name="Haas W."/>
            <person name="Sowa M.E."/>
            <person name="Gygi S.P."/>
        </authorList>
    </citation>
    <scope>PHOSPHORYLATION [LARGE SCALE ANALYSIS] AT SER-40; SER-403; SER-538; SER-560; SER-595; SER-753; SER-757 AND SER-961</scope>
    <scope>IDENTIFICATION BY MASS SPECTROMETRY [LARGE SCALE ANALYSIS]</scope>
    <source>
        <tissue>Brown adipose tissue</tissue>
        <tissue>Heart</tissue>
        <tissue>Kidney</tissue>
        <tissue>Liver</tissue>
        <tissue>Lung</tissue>
        <tissue>Pancreas</tissue>
        <tissue>Spleen</tissue>
        <tissue>Testis</tissue>
    </source>
</reference>
<protein>
    <recommendedName>
        <fullName>Liprin-beta-1</fullName>
    </recommendedName>
    <alternativeName>
        <fullName>Protein tyrosine phosphatase receptor type f polypeptide-interacting protein-binding protein 1</fullName>
        <shortName>PTPRF-interacting protein-binding protein 1</shortName>
    </alternativeName>
</protein>
<accession>Q8C8U0</accession>
<accession>Q69ZN5</accession>
<accession>Q6GQV3</accession>
<accession>Q80VB4</accession>
<accession>Q9CUT7</accession>
<dbReference type="EMBL" id="AK044496">
    <property type="protein sequence ID" value="BAC31950.1"/>
    <property type="molecule type" value="mRNA"/>
</dbReference>
<dbReference type="EMBL" id="AK014559">
    <property type="protein sequence ID" value="BAB29428.1"/>
    <property type="molecule type" value="mRNA"/>
</dbReference>
<dbReference type="EMBL" id="AK173133">
    <property type="protein sequence ID" value="BAD32411.1"/>
    <property type="status" value="ALT_INIT"/>
    <property type="molecule type" value="mRNA"/>
</dbReference>
<dbReference type="EMBL" id="BC049862">
    <property type="protein sequence ID" value="AAH49862.1"/>
    <property type="molecule type" value="mRNA"/>
</dbReference>
<dbReference type="EMBL" id="BC058176">
    <property type="protein sequence ID" value="AAH58176.1"/>
    <property type="molecule type" value="mRNA"/>
</dbReference>
<dbReference type="EMBL" id="BC072603">
    <property type="protein sequence ID" value="AAH72603.1"/>
    <property type="molecule type" value="mRNA"/>
</dbReference>
<dbReference type="CCDS" id="CCDS39715.1">
    <molecule id="Q8C8U0-1"/>
</dbReference>
<dbReference type="CCDS" id="CCDS51958.1">
    <molecule id="Q8C8U0-3"/>
</dbReference>
<dbReference type="RefSeq" id="NP_001163904.1">
    <molecule id="Q8C8U0-3"/>
    <property type="nucleotide sequence ID" value="NM_001170433.1"/>
</dbReference>
<dbReference type="RefSeq" id="NP_001342658.1">
    <molecule id="Q8C8U0-1"/>
    <property type="nucleotide sequence ID" value="NM_001355729.1"/>
</dbReference>
<dbReference type="RefSeq" id="NP_080497.1">
    <molecule id="Q8C8U0-1"/>
    <property type="nucleotide sequence ID" value="NM_026221.2"/>
</dbReference>
<dbReference type="RefSeq" id="XP_017177208.1">
    <property type="nucleotide sequence ID" value="XM_017321719.1"/>
</dbReference>
<dbReference type="PDB" id="3TAD">
    <property type="method" value="X-ray"/>
    <property type="resolution" value="2.90 A"/>
    <property type="chains" value="C/D=593-853"/>
</dbReference>
<dbReference type="PDB" id="8IW0">
    <property type="method" value="X-ray"/>
    <property type="resolution" value="2.10 A"/>
    <property type="chains" value="A/B/C/D=1-23"/>
</dbReference>
<dbReference type="PDB" id="8IW5">
    <property type="method" value="X-ray"/>
    <property type="resolution" value="1.70 A"/>
    <property type="chains" value="A/B=43-89"/>
</dbReference>
<dbReference type="PDBsum" id="3TAD"/>
<dbReference type="PDBsum" id="8IW0"/>
<dbReference type="PDBsum" id="8IW5"/>
<dbReference type="SMR" id="Q8C8U0"/>
<dbReference type="BioGRID" id="212256">
    <property type="interactions" value="5"/>
</dbReference>
<dbReference type="FunCoup" id="Q8C8U0">
    <property type="interactions" value="682"/>
</dbReference>
<dbReference type="IntAct" id="Q8C8U0">
    <property type="interactions" value="2"/>
</dbReference>
<dbReference type="MINT" id="Q8C8U0"/>
<dbReference type="STRING" id="10090.ENSMUSP00000107250"/>
<dbReference type="GlyGen" id="Q8C8U0">
    <property type="glycosylation" value="2 sites, 1 O-linked glycan (1 site)"/>
</dbReference>
<dbReference type="iPTMnet" id="Q8C8U0"/>
<dbReference type="PhosphoSitePlus" id="Q8C8U0"/>
<dbReference type="jPOST" id="Q8C8U0"/>
<dbReference type="PaxDb" id="10090-ENSMUSP00000107250"/>
<dbReference type="PeptideAtlas" id="Q8C8U0"/>
<dbReference type="ProteomicsDB" id="290124">
    <molecule id="Q8C8U0-1"/>
</dbReference>
<dbReference type="ProteomicsDB" id="290125">
    <molecule id="Q8C8U0-2"/>
</dbReference>
<dbReference type="ProteomicsDB" id="290126">
    <molecule id="Q8C8U0-3"/>
</dbReference>
<dbReference type="Pumba" id="Q8C8U0"/>
<dbReference type="Antibodypedia" id="1098">
    <property type="antibodies" value="160 antibodies from 29 providers"/>
</dbReference>
<dbReference type="DNASU" id="67533"/>
<dbReference type="Ensembl" id="ENSMUST00000016631.14">
    <molecule id="Q8C8U0-1"/>
    <property type="protein sequence ID" value="ENSMUSP00000016631.8"/>
    <property type="gene ID" value="ENSMUSG00000016487.16"/>
</dbReference>
<dbReference type="Ensembl" id="ENSMUST00000111623.9">
    <molecule id="Q8C8U0-3"/>
    <property type="protein sequence ID" value="ENSMUSP00000107250.3"/>
    <property type="gene ID" value="ENSMUSG00000016487.16"/>
</dbReference>
<dbReference type="GeneID" id="67533"/>
<dbReference type="KEGG" id="mmu:67533"/>
<dbReference type="UCSC" id="uc009esm.2">
    <molecule id="Q8C8U0-1"/>
    <property type="organism name" value="mouse"/>
</dbReference>
<dbReference type="UCSC" id="uc009esn.2">
    <molecule id="Q8C8U0-3"/>
    <property type="organism name" value="mouse"/>
</dbReference>
<dbReference type="AGR" id="MGI:1914783"/>
<dbReference type="CTD" id="8496"/>
<dbReference type="MGI" id="MGI:1914783">
    <property type="gene designation" value="Ppfibp1"/>
</dbReference>
<dbReference type="VEuPathDB" id="HostDB:ENSMUSG00000016487"/>
<dbReference type="eggNOG" id="KOG1899">
    <property type="taxonomic scope" value="Eukaryota"/>
</dbReference>
<dbReference type="GeneTree" id="ENSGT01050000244951"/>
<dbReference type="HOGENOM" id="CLU_011689_2_0_1"/>
<dbReference type="InParanoid" id="Q8C8U0"/>
<dbReference type="OMA" id="WSNSGTP"/>
<dbReference type="OrthoDB" id="6516566at2759"/>
<dbReference type="PhylomeDB" id="Q8C8U0"/>
<dbReference type="TreeFam" id="TF314207"/>
<dbReference type="Reactome" id="R-MMU-388844">
    <property type="pathway name" value="Receptor-type tyrosine-protein phosphatases"/>
</dbReference>
<dbReference type="BioGRID-ORCS" id="67533">
    <property type="hits" value="2 hits in 76 CRISPR screens"/>
</dbReference>
<dbReference type="ChiTaRS" id="Ppfibp1">
    <property type="organism name" value="mouse"/>
</dbReference>
<dbReference type="EvolutionaryTrace" id="Q8C8U0"/>
<dbReference type="PRO" id="PR:Q8C8U0"/>
<dbReference type="Proteomes" id="UP000000589">
    <property type="component" value="Chromosome 6"/>
</dbReference>
<dbReference type="RNAct" id="Q8C8U0">
    <property type="molecule type" value="protein"/>
</dbReference>
<dbReference type="Bgee" id="ENSMUSG00000016487">
    <property type="expression patterns" value="Expressed in embryonic post-anal tail and 232 other cell types or tissues"/>
</dbReference>
<dbReference type="ExpressionAtlas" id="Q8C8U0">
    <property type="expression patterns" value="baseline and differential"/>
</dbReference>
<dbReference type="GO" id="GO:0005938">
    <property type="term" value="C:cell cortex"/>
    <property type="evidence" value="ECO:0007669"/>
    <property type="project" value="UniProtKB-SubCell"/>
</dbReference>
<dbReference type="GO" id="GO:0005886">
    <property type="term" value="C:plasma membrane"/>
    <property type="evidence" value="ECO:0007669"/>
    <property type="project" value="Ensembl"/>
</dbReference>
<dbReference type="GO" id="GO:0043622">
    <property type="term" value="P:cortical microtubule organization"/>
    <property type="evidence" value="ECO:0007669"/>
    <property type="project" value="Ensembl"/>
</dbReference>
<dbReference type="CDD" id="cd09563">
    <property type="entry name" value="SAM_liprin-beta1_2_repeat1"/>
    <property type="match status" value="1"/>
</dbReference>
<dbReference type="CDD" id="cd09566">
    <property type="entry name" value="SAM_liprin-beta1_2_repeat2"/>
    <property type="match status" value="1"/>
</dbReference>
<dbReference type="CDD" id="cd09569">
    <property type="entry name" value="SAM_liprin-beta1_2_repeat3"/>
    <property type="match status" value="1"/>
</dbReference>
<dbReference type="FunFam" id="1.10.150.50:FF:000005">
    <property type="entry name" value="Liprin-beta-1 isoform 1"/>
    <property type="match status" value="1"/>
</dbReference>
<dbReference type="FunFam" id="1.10.150.50:FF:000007">
    <property type="entry name" value="Liprin-beta-1 isoform 1"/>
    <property type="match status" value="1"/>
</dbReference>
<dbReference type="FunFam" id="1.10.150.50:FF:000017">
    <property type="entry name" value="Liprin-beta-1 isoform 1"/>
    <property type="match status" value="1"/>
</dbReference>
<dbReference type="Gene3D" id="1.10.150.50">
    <property type="entry name" value="Transcription Factor, Ets-1"/>
    <property type="match status" value="3"/>
</dbReference>
<dbReference type="InterPro" id="IPR029515">
    <property type="entry name" value="Liprin"/>
</dbReference>
<dbReference type="InterPro" id="IPR037617">
    <property type="entry name" value="Liprin-beta_SAM_rpt_1"/>
</dbReference>
<dbReference type="InterPro" id="IPR037618">
    <property type="entry name" value="Liprin-beta_SAM_rpt_2"/>
</dbReference>
<dbReference type="InterPro" id="IPR037619">
    <property type="entry name" value="Liprin-beta_SAM_rpt_3"/>
</dbReference>
<dbReference type="InterPro" id="IPR001660">
    <property type="entry name" value="SAM"/>
</dbReference>
<dbReference type="InterPro" id="IPR013761">
    <property type="entry name" value="SAM/pointed_sf"/>
</dbReference>
<dbReference type="PANTHER" id="PTHR12587">
    <property type="entry name" value="LAR INTERACTING PROTEIN LIP -RELATED PROTEIN"/>
    <property type="match status" value="1"/>
</dbReference>
<dbReference type="PANTHER" id="PTHR12587:SF16">
    <property type="entry name" value="LIPRIN-BETA-1"/>
    <property type="match status" value="1"/>
</dbReference>
<dbReference type="Pfam" id="PF00536">
    <property type="entry name" value="SAM_1"/>
    <property type="match status" value="2"/>
</dbReference>
<dbReference type="Pfam" id="PF07647">
    <property type="entry name" value="SAM_2"/>
    <property type="match status" value="1"/>
</dbReference>
<dbReference type="SMART" id="SM00454">
    <property type="entry name" value="SAM"/>
    <property type="match status" value="3"/>
</dbReference>
<dbReference type="SUPFAM" id="SSF144266">
    <property type="entry name" value="MPN010-like"/>
    <property type="match status" value="1"/>
</dbReference>
<dbReference type="SUPFAM" id="SSF47769">
    <property type="entry name" value="SAM/Pointed domain"/>
    <property type="match status" value="3"/>
</dbReference>
<dbReference type="PROSITE" id="PS50105">
    <property type="entry name" value="SAM_DOMAIN"/>
    <property type="match status" value="2"/>
</dbReference>
<name>LIPB1_MOUSE</name>
<evidence type="ECO:0000250" key="1">
    <source>
        <dbReference type="UniProtKB" id="Q86W92"/>
    </source>
</evidence>
<evidence type="ECO:0000255" key="2"/>
<evidence type="ECO:0000255" key="3">
    <source>
        <dbReference type="PROSITE-ProRule" id="PRU00184"/>
    </source>
</evidence>
<evidence type="ECO:0000256" key="4">
    <source>
        <dbReference type="SAM" id="MobiDB-lite"/>
    </source>
</evidence>
<evidence type="ECO:0000303" key="5">
    <source>
    </source>
</evidence>
<evidence type="ECO:0000303" key="6">
    <source>
    </source>
</evidence>
<evidence type="ECO:0000305" key="7"/>
<evidence type="ECO:0007744" key="8">
    <source>
    </source>
</evidence>
<evidence type="ECO:0007744" key="9">
    <source>
    </source>
</evidence>
<evidence type="ECO:0007744" key="10">
    <source>
    </source>
</evidence>
<evidence type="ECO:0007829" key="11">
    <source>
        <dbReference type="PDB" id="3TAD"/>
    </source>
</evidence>
<evidence type="ECO:0007829" key="12">
    <source>
        <dbReference type="PDB" id="8IW5"/>
    </source>
</evidence>
<sequence length="969" mass="108540">MMSDASDMLAAALEQMDGIIAGSKALEYSNGIFDCQSPTSPFMGSLRALHLVEDLRGLLEMMETDEKEGLRCQIPDSTAEVLIEWLQNQMTNGHLPGNGDVYQERLARLENDKESLVLQVSVLTDQVEAQGEKIRDLEFCLEEHREKLNATEEMLQQELLSRTSLETQKLELMAEISNLKLKLTAVEKDRLDYEDRFRDTEGLIQEINDLRLKVNEMDGERLQYEKKLKSTKDELASLKEQLEEKECEVKRLQERLVCKAKGEGIEVLDRDIEVQKMKKAVESLMAANEEKERKIEDLRQCLSRYRKMQDPAVLAQGQDSECEGLFHSSSISTLLDAQGFSDLERSTSSTPGMGSPSRDLLHTSAPEEFHTSVLQASIPSLLPPSVDVDTCEKPKLPTKPETSFEEGDGRAILGAAAEVSLSDGVSTSSLQKSSSLGNLKKEASDGTDKAPTDSRTFGTLPPKVPGHEASVDDNPFGTRKARSSFGRGFFKIKSGKRTASAPNLAETEKETAEHLNLAGTSRSKGSQGTSPFPMSPPSPDSRKKSRGIMRLFGKLRRSQSTTFNPDDMSEPEFKRGGTRATAGPRLGWSRDLGQSNSDLDMPFAKWTKEQVCSWLAEQGLGSYLSSGKHWIISGQTLLQASQQDLEKELGIKHSLHRKKLQLALQALGSEEETNYGKLDFNWVTRWLDDIGLPQYKTQFDEGRVDGRMLHYMTVDDLLSLKVVSVLHHLSIKRAIQVLRINNFEPNCLRRRPSDENSITPSEVQQWTNHRVMEWLRSVDLAEYAPNLRGSGVHGGLMVLEPRFNVETMAQLLNIPPNKTLLRRHLATHFNLLIGAEAQHQKRDAMELPDYVLLTATAKVKPKKLTFSNFGNLRKKKHEDGEEYVCPMELGQASGSSQKGFRPGLDMRLYEEDDLDRLEQMEDSEGTVRQIGAFSEGINNLTHMLKEDDMFKDFAARSPSASITDEDSNV</sequence>
<organism>
    <name type="scientific">Mus musculus</name>
    <name type="common">Mouse</name>
    <dbReference type="NCBI Taxonomy" id="10090"/>
    <lineage>
        <taxon>Eukaryota</taxon>
        <taxon>Metazoa</taxon>
        <taxon>Chordata</taxon>
        <taxon>Craniata</taxon>
        <taxon>Vertebrata</taxon>
        <taxon>Euteleostomi</taxon>
        <taxon>Mammalia</taxon>
        <taxon>Eutheria</taxon>
        <taxon>Euarchontoglires</taxon>
        <taxon>Glires</taxon>
        <taxon>Rodentia</taxon>
        <taxon>Myomorpha</taxon>
        <taxon>Muroidea</taxon>
        <taxon>Muridae</taxon>
        <taxon>Murinae</taxon>
        <taxon>Mus</taxon>
        <taxon>Mus</taxon>
    </lineage>
</organism>
<gene>
    <name type="primary">Ppfibp1</name>
    <name type="synonym">Kiaa1230</name>
</gene>